<evidence type="ECO:0000255" key="1">
    <source>
        <dbReference type="HAMAP-Rule" id="MF_00688"/>
    </source>
</evidence>
<name>LFTR_RHILW</name>
<feature type="chain" id="PRO_1000131942" description="Leucyl/phenylalanyl-tRNA--protein transferase">
    <location>
        <begin position="1"/>
        <end position="204"/>
    </location>
</feature>
<proteinExistence type="inferred from homology"/>
<protein>
    <recommendedName>
        <fullName evidence="1">Leucyl/phenylalanyl-tRNA--protein transferase</fullName>
        <ecNumber evidence="1">2.3.2.6</ecNumber>
    </recommendedName>
    <alternativeName>
        <fullName evidence="1">L/F-transferase</fullName>
    </alternativeName>
    <alternativeName>
        <fullName evidence="1">Leucyltransferase</fullName>
    </alternativeName>
    <alternativeName>
        <fullName evidence="1">Phenyalanyltransferase</fullName>
    </alternativeName>
</protein>
<dbReference type="EC" id="2.3.2.6" evidence="1"/>
<dbReference type="EMBL" id="CP001191">
    <property type="protein sequence ID" value="ACI54825.1"/>
    <property type="molecule type" value="Genomic_DNA"/>
</dbReference>
<dbReference type="RefSeq" id="WP_012557520.1">
    <property type="nucleotide sequence ID" value="NC_011369.1"/>
</dbReference>
<dbReference type="SMR" id="B5ZMK3"/>
<dbReference type="STRING" id="395492.Rleg2_1535"/>
<dbReference type="KEGG" id="rlt:Rleg2_1535"/>
<dbReference type="eggNOG" id="COG2360">
    <property type="taxonomic scope" value="Bacteria"/>
</dbReference>
<dbReference type="HOGENOM" id="CLU_075045_1_1_5"/>
<dbReference type="Proteomes" id="UP000008330">
    <property type="component" value="Chromosome"/>
</dbReference>
<dbReference type="GO" id="GO:0005737">
    <property type="term" value="C:cytoplasm"/>
    <property type="evidence" value="ECO:0007669"/>
    <property type="project" value="UniProtKB-SubCell"/>
</dbReference>
<dbReference type="GO" id="GO:0008914">
    <property type="term" value="F:leucyl-tRNA--protein transferase activity"/>
    <property type="evidence" value="ECO:0007669"/>
    <property type="project" value="UniProtKB-UniRule"/>
</dbReference>
<dbReference type="GO" id="GO:0030163">
    <property type="term" value="P:protein catabolic process"/>
    <property type="evidence" value="ECO:0007669"/>
    <property type="project" value="UniProtKB-UniRule"/>
</dbReference>
<dbReference type="FunFam" id="3.40.630.70:FF:000001">
    <property type="entry name" value="Leucyl/phenylalanyl-tRNA--protein transferase"/>
    <property type="match status" value="1"/>
</dbReference>
<dbReference type="Gene3D" id="3.40.630.70">
    <property type="entry name" value="Leucyl/phenylalanyl-tRNA-protein transferase, C-terminal domain"/>
    <property type="match status" value="1"/>
</dbReference>
<dbReference type="HAMAP" id="MF_00688">
    <property type="entry name" value="Leu_Phe_trans"/>
    <property type="match status" value="1"/>
</dbReference>
<dbReference type="InterPro" id="IPR016181">
    <property type="entry name" value="Acyl_CoA_acyltransferase"/>
</dbReference>
<dbReference type="InterPro" id="IPR004616">
    <property type="entry name" value="Leu/Phe-tRNA_Trfase"/>
</dbReference>
<dbReference type="InterPro" id="IPR042203">
    <property type="entry name" value="Leu/Phe-tRNA_Trfase_C"/>
</dbReference>
<dbReference type="NCBIfam" id="TIGR00667">
    <property type="entry name" value="aat"/>
    <property type="match status" value="1"/>
</dbReference>
<dbReference type="PANTHER" id="PTHR30098">
    <property type="entry name" value="LEUCYL/PHENYLALANYL-TRNA--PROTEIN TRANSFERASE"/>
    <property type="match status" value="1"/>
</dbReference>
<dbReference type="PANTHER" id="PTHR30098:SF2">
    <property type="entry name" value="LEUCYL_PHENYLALANYL-TRNA--PROTEIN TRANSFERASE"/>
    <property type="match status" value="1"/>
</dbReference>
<dbReference type="Pfam" id="PF03588">
    <property type="entry name" value="Leu_Phe_trans"/>
    <property type="match status" value="1"/>
</dbReference>
<dbReference type="SUPFAM" id="SSF55729">
    <property type="entry name" value="Acyl-CoA N-acyltransferases (Nat)"/>
    <property type="match status" value="1"/>
</dbReference>
<keyword id="KW-0012">Acyltransferase</keyword>
<keyword id="KW-0963">Cytoplasm</keyword>
<keyword id="KW-1185">Reference proteome</keyword>
<keyword id="KW-0808">Transferase</keyword>
<reference key="1">
    <citation type="journal article" date="2010" name="Stand. Genomic Sci.">
        <title>Complete genome sequence of Rhizobium leguminosarum bv trifolii strain WSM2304, an effective microsymbiont of the South American clover Trifolium polymorphum.</title>
        <authorList>
            <person name="Reeve W."/>
            <person name="O'Hara G."/>
            <person name="Chain P."/>
            <person name="Ardley J."/>
            <person name="Brau L."/>
            <person name="Nandesena K."/>
            <person name="Tiwari R."/>
            <person name="Malfatti S."/>
            <person name="Kiss H."/>
            <person name="Lapidus A."/>
            <person name="Copeland A."/>
            <person name="Nolan M."/>
            <person name="Land M."/>
            <person name="Ivanova N."/>
            <person name="Mavromatis K."/>
            <person name="Markowitz V."/>
            <person name="Kyrpides N."/>
            <person name="Melino V."/>
            <person name="Denton M."/>
            <person name="Yates R."/>
            <person name="Howieson J."/>
        </authorList>
    </citation>
    <scope>NUCLEOTIDE SEQUENCE [LARGE SCALE GENOMIC DNA]</scope>
    <source>
        <strain>WSM2304</strain>
    </source>
</reference>
<gene>
    <name evidence="1" type="primary">aat</name>
    <name type="ordered locus">Rleg2_1535</name>
</gene>
<sequence>MAGSRRKSPGITPEILLRAYSIGLFPMAESADDPEIFWVEPELRGVLPLDHFHLSKSLAKTVRRKPFEIRFDHAFDSVIAACAEETSGRPSTWINKTIRSLYATLFDMGHAHTVEAWDGDKLVGGLYGVSLGSAFFGESMFSRRTDASKICLVHLVERLRERGFTLLDTQFTTEHLKTFGAIDVAKADYAVMLAAAMQSPHLKF</sequence>
<organism>
    <name type="scientific">Rhizobium leguminosarum bv. trifolii (strain WSM2304)</name>
    <dbReference type="NCBI Taxonomy" id="395492"/>
    <lineage>
        <taxon>Bacteria</taxon>
        <taxon>Pseudomonadati</taxon>
        <taxon>Pseudomonadota</taxon>
        <taxon>Alphaproteobacteria</taxon>
        <taxon>Hyphomicrobiales</taxon>
        <taxon>Rhizobiaceae</taxon>
        <taxon>Rhizobium/Agrobacterium group</taxon>
        <taxon>Rhizobium</taxon>
    </lineage>
</organism>
<comment type="function">
    <text evidence="1">Functions in the N-end rule pathway of protein degradation where it conjugates Leu, Phe and, less efficiently, Met from aminoacyl-tRNAs to the N-termini of proteins containing an N-terminal arginine or lysine.</text>
</comment>
<comment type="catalytic activity">
    <reaction evidence="1">
        <text>N-terminal L-lysyl-[protein] + L-leucyl-tRNA(Leu) = N-terminal L-leucyl-L-lysyl-[protein] + tRNA(Leu) + H(+)</text>
        <dbReference type="Rhea" id="RHEA:12340"/>
        <dbReference type="Rhea" id="RHEA-COMP:9613"/>
        <dbReference type="Rhea" id="RHEA-COMP:9622"/>
        <dbReference type="Rhea" id="RHEA-COMP:12670"/>
        <dbReference type="Rhea" id="RHEA-COMP:12671"/>
        <dbReference type="ChEBI" id="CHEBI:15378"/>
        <dbReference type="ChEBI" id="CHEBI:65249"/>
        <dbReference type="ChEBI" id="CHEBI:78442"/>
        <dbReference type="ChEBI" id="CHEBI:78494"/>
        <dbReference type="ChEBI" id="CHEBI:133043"/>
        <dbReference type="EC" id="2.3.2.6"/>
    </reaction>
</comment>
<comment type="catalytic activity">
    <reaction evidence="1">
        <text>N-terminal L-arginyl-[protein] + L-leucyl-tRNA(Leu) = N-terminal L-leucyl-L-arginyl-[protein] + tRNA(Leu) + H(+)</text>
        <dbReference type="Rhea" id="RHEA:50416"/>
        <dbReference type="Rhea" id="RHEA-COMP:9613"/>
        <dbReference type="Rhea" id="RHEA-COMP:9622"/>
        <dbReference type="Rhea" id="RHEA-COMP:12672"/>
        <dbReference type="Rhea" id="RHEA-COMP:12673"/>
        <dbReference type="ChEBI" id="CHEBI:15378"/>
        <dbReference type="ChEBI" id="CHEBI:64719"/>
        <dbReference type="ChEBI" id="CHEBI:78442"/>
        <dbReference type="ChEBI" id="CHEBI:78494"/>
        <dbReference type="ChEBI" id="CHEBI:133044"/>
        <dbReference type="EC" id="2.3.2.6"/>
    </reaction>
</comment>
<comment type="catalytic activity">
    <reaction evidence="1">
        <text>L-phenylalanyl-tRNA(Phe) + an N-terminal L-alpha-aminoacyl-[protein] = an N-terminal L-phenylalanyl-L-alpha-aminoacyl-[protein] + tRNA(Phe)</text>
        <dbReference type="Rhea" id="RHEA:43632"/>
        <dbReference type="Rhea" id="RHEA-COMP:9668"/>
        <dbReference type="Rhea" id="RHEA-COMP:9699"/>
        <dbReference type="Rhea" id="RHEA-COMP:10636"/>
        <dbReference type="Rhea" id="RHEA-COMP:10637"/>
        <dbReference type="ChEBI" id="CHEBI:78442"/>
        <dbReference type="ChEBI" id="CHEBI:78531"/>
        <dbReference type="ChEBI" id="CHEBI:78597"/>
        <dbReference type="ChEBI" id="CHEBI:83561"/>
        <dbReference type="EC" id="2.3.2.6"/>
    </reaction>
</comment>
<comment type="subcellular location">
    <subcellularLocation>
        <location evidence="1">Cytoplasm</location>
    </subcellularLocation>
</comment>
<comment type="similarity">
    <text evidence="1">Belongs to the L/F-transferase family.</text>
</comment>
<accession>B5ZMK3</accession>